<feature type="chain" id="PRO_0000388025" description="Structure-specific endonuclease subunit SLX4">
    <location>
        <begin position="1"/>
        <end position="958"/>
    </location>
</feature>
<feature type="region of interest" description="Disordered" evidence="2">
    <location>
        <begin position="89"/>
        <end position="123"/>
    </location>
</feature>
<feature type="region of interest" description="Disordered" evidence="2">
    <location>
        <begin position="183"/>
        <end position="209"/>
    </location>
</feature>
<feature type="region of interest" description="Disordered" evidence="2">
    <location>
        <begin position="326"/>
        <end position="400"/>
    </location>
</feature>
<feature type="region of interest" description="Disordered" evidence="2">
    <location>
        <begin position="531"/>
        <end position="589"/>
    </location>
</feature>
<feature type="region of interest" description="Disordered" evidence="2">
    <location>
        <begin position="594"/>
        <end position="613"/>
    </location>
</feature>
<feature type="region of interest" description="Disordered" evidence="2">
    <location>
        <begin position="655"/>
        <end position="849"/>
    </location>
</feature>
<feature type="compositionally biased region" description="Basic residues" evidence="2">
    <location>
        <begin position="109"/>
        <end position="121"/>
    </location>
</feature>
<feature type="compositionally biased region" description="Basic and acidic residues" evidence="2">
    <location>
        <begin position="332"/>
        <end position="341"/>
    </location>
</feature>
<feature type="compositionally biased region" description="Polar residues" evidence="2">
    <location>
        <begin position="342"/>
        <end position="351"/>
    </location>
</feature>
<feature type="compositionally biased region" description="Low complexity" evidence="2">
    <location>
        <begin position="364"/>
        <end position="373"/>
    </location>
</feature>
<feature type="compositionally biased region" description="Basic residues" evidence="2">
    <location>
        <begin position="374"/>
        <end position="389"/>
    </location>
</feature>
<feature type="compositionally biased region" description="Pro residues" evidence="2">
    <location>
        <begin position="600"/>
        <end position="610"/>
    </location>
</feature>
<feature type="compositionally biased region" description="Low complexity" evidence="2">
    <location>
        <begin position="655"/>
        <end position="666"/>
    </location>
</feature>
<feature type="compositionally biased region" description="Low complexity" evidence="2">
    <location>
        <begin position="775"/>
        <end position="787"/>
    </location>
</feature>
<feature type="compositionally biased region" description="Low complexity" evidence="2">
    <location>
        <begin position="821"/>
        <end position="838"/>
    </location>
</feature>
<gene>
    <name evidence="1" type="primary">SLX4</name>
    <name type="ORF">CHGG_02028</name>
</gene>
<sequence length="958" mass="102188">MAHHDSVLVISSSPDFPSICDLLPKATRQPSLRSGSNAAPVSNDAPAAFTSAANIWQSSRARHLEGAEISNIGPSQSATTAADLATVPAESPIKSGVEGPTLPLGGDKKKPRTAGARKKKGKTETIEPPLALDMAVADGPVAVAPPKKSGRKPRAKKDATLAQTTLPKGKVTKTAAREITKAQKKAETVSRHFTPHTSAPPELVAGPIDDSPSVFEPAMARRMDWTPPRESASVHCLADSSMEKEVSSSALSLQDHVFKNLQDTYGRTMEASGYIGAALPLTSMDVLGKRKLVEMVSCVGHRQEIPQASPTKPKVVKKKPRTITELATAAYRRPEEAERSTLSRQQDTHIPSGNLELPSEQLTAASKSASAKPKAAKKAPKPRATKKKQSPPEPILLSPTSAMRQVSNQDFVFGTASQLATEDDPVLLRALHEAMKVSNQADSDPFATPSPGNSNLAIRRRSGAGLWAAGARYGDGDLLDAEVLDLTRSSPLTLAQFAQNPPPPCPEAVLADKPPVESAYIEIEMSDDTLDLTISPPVGSPKTLPPCPPRPGGQAVRHKDSNLAVSGRPQTPPQEADFDPPPSNQEQHQLLLSQSNTPQQPQPAPPPPPSFELYTDARLAKEVASYGFKVVKKRTAMIALLNRCWESRNKTALGSTAAQAAMSTSAPNQAASPSRPRGRPRKDSLTATTEVVQAPSPAKKGRKKAGVVSGAGSEVPQPEKWPRGRPRKDSAASVSSITAPAATNPRRRSAAISDVDSDEPQVEKRSRGRPKKDATTSPATRATRAKAPPSPKRAKSPCTTQPAPTTPRRRKAPAKQIFEIPDSGSDDPFASSAPSSPDQHSDLFSSPPAVDLSVTEDTEASLIASPTTQDVSLFGYITRAVASAPPTKDPANPSWHEKMLMYDPIILEDLTAWLNAGRLDQVGFDGEVAPGDVKKWCESKSVCCLWRVNLRGKERKRF</sequence>
<dbReference type="EMBL" id="CH408029">
    <property type="protein sequence ID" value="EAQ93793.1"/>
    <property type="status" value="ALT_SEQ"/>
    <property type="molecule type" value="Genomic_DNA"/>
</dbReference>
<dbReference type="RefSeq" id="XP_001221249.1">
    <property type="nucleotide sequence ID" value="XM_001221248.1"/>
</dbReference>
<dbReference type="SMR" id="Q2HCM6"/>
<dbReference type="STRING" id="306901.Q2HCM6"/>
<dbReference type="GeneID" id="4388104"/>
<dbReference type="VEuPathDB" id="FungiDB:CHGG_02028"/>
<dbReference type="eggNOG" id="ENOG502SEB3">
    <property type="taxonomic scope" value="Eukaryota"/>
</dbReference>
<dbReference type="HOGENOM" id="CLU_005957_0_0_1"/>
<dbReference type="InParanoid" id="Q2HCM6"/>
<dbReference type="OrthoDB" id="5349119at2759"/>
<dbReference type="Proteomes" id="UP000001056">
    <property type="component" value="Unassembled WGS sequence"/>
</dbReference>
<dbReference type="GO" id="GO:0033557">
    <property type="term" value="C:Slx1-Slx4 complex"/>
    <property type="evidence" value="ECO:0007669"/>
    <property type="project" value="UniProtKB-UniRule"/>
</dbReference>
<dbReference type="GO" id="GO:0017108">
    <property type="term" value="F:5'-flap endonuclease activity"/>
    <property type="evidence" value="ECO:0007669"/>
    <property type="project" value="InterPro"/>
</dbReference>
<dbReference type="GO" id="GO:0003677">
    <property type="term" value="F:DNA binding"/>
    <property type="evidence" value="ECO:0007669"/>
    <property type="project" value="InterPro"/>
</dbReference>
<dbReference type="GO" id="GO:0006310">
    <property type="term" value="P:DNA recombination"/>
    <property type="evidence" value="ECO:0007669"/>
    <property type="project" value="UniProtKB-UniRule"/>
</dbReference>
<dbReference type="GO" id="GO:0006281">
    <property type="term" value="P:DNA repair"/>
    <property type="evidence" value="ECO:0007669"/>
    <property type="project" value="UniProtKB-UniRule"/>
</dbReference>
<dbReference type="GO" id="GO:0006260">
    <property type="term" value="P:DNA replication"/>
    <property type="evidence" value="ECO:0007669"/>
    <property type="project" value="InterPro"/>
</dbReference>
<dbReference type="CDD" id="cd22999">
    <property type="entry name" value="SAP_SLX4"/>
    <property type="match status" value="1"/>
</dbReference>
<dbReference type="HAMAP" id="MF_03110">
    <property type="entry name" value="Endonuc_su_Slx4"/>
    <property type="match status" value="1"/>
</dbReference>
<dbReference type="InterPro" id="IPR017956">
    <property type="entry name" value="AT_hook_DNA-bd_motif"/>
</dbReference>
<dbReference type="InterPro" id="IPR027784">
    <property type="entry name" value="Slx4_ascomycetes"/>
</dbReference>
<dbReference type="InterPro" id="IPR018574">
    <property type="entry name" value="Structure-sp_endonuc_su_Slx4"/>
</dbReference>
<dbReference type="Pfam" id="PF02178">
    <property type="entry name" value="AT_hook"/>
    <property type="match status" value="3"/>
</dbReference>
<dbReference type="Pfam" id="PF09494">
    <property type="entry name" value="Slx4"/>
    <property type="match status" value="1"/>
</dbReference>
<dbReference type="PRINTS" id="PR00929">
    <property type="entry name" value="ATHOOK"/>
</dbReference>
<dbReference type="SMART" id="SM00384">
    <property type="entry name" value="AT_hook"/>
    <property type="match status" value="3"/>
</dbReference>
<name>SLX4_CHAGB</name>
<protein>
    <recommendedName>
        <fullName evidence="1">Structure-specific endonuclease subunit SLX4</fullName>
    </recommendedName>
</protein>
<accession>Q2HCM6</accession>
<proteinExistence type="inferred from homology"/>
<evidence type="ECO:0000255" key="1">
    <source>
        <dbReference type="HAMAP-Rule" id="MF_03110"/>
    </source>
</evidence>
<evidence type="ECO:0000256" key="2">
    <source>
        <dbReference type="SAM" id="MobiDB-lite"/>
    </source>
</evidence>
<evidence type="ECO:0000305" key="3"/>
<keyword id="KW-0227">DNA damage</keyword>
<keyword id="KW-0233">DNA recombination</keyword>
<keyword id="KW-0234">DNA repair</keyword>
<keyword id="KW-0539">Nucleus</keyword>
<keyword id="KW-0597">Phosphoprotein</keyword>
<keyword id="KW-1185">Reference proteome</keyword>
<organism>
    <name type="scientific">Chaetomium globosum (strain ATCC 6205 / CBS 148.51 / DSM 1962 / NBRC 6347 / NRRL 1970)</name>
    <name type="common">Soil fungus</name>
    <dbReference type="NCBI Taxonomy" id="306901"/>
    <lineage>
        <taxon>Eukaryota</taxon>
        <taxon>Fungi</taxon>
        <taxon>Dikarya</taxon>
        <taxon>Ascomycota</taxon>
        <taxon>Pezizomycotina</taxon>
        <taxon>Sordariomycetes</taxon>
        <taxon>Sordariomycetidae</taxon>
        <taxon>Sordariales</taxon>
        <taxon>Chaetomiaceae</taxon>
        <taxon>Chaetomium</taxon>
    </lineage>
</organism>
<reference key="1">
    <citation type="journal article" date="2015" name="Genome Announc.">
        <title>Draft genome sequence of the cellulolytic fungus Chaetomium globosum.</title>
        <authorList>
            <person name="Cuomo C.A."/>
            <person name="Untereiner W.A."/>
            <person name="Ma L.-J."/>
            <person name="Grabherr M."/>
            <person name="Birren B.W."/>
        </authorList>
    </citation>
    <scope>NUCLEOTIDE SEQUENCE [LARGE SCALE GENOMIC DNA]</scope>
    <source>
        <strain>ATCC 6205 / CBS 148.51 / DSM 1962 / NBRC 6347 / NRRL 1970</strain>
    </source>
</reference>
<comment type="function">
    <text evidence="1">Regulatory subunit of the SLX1-SLX4 structure-specific endonuclease that resolves DNA secondary structures generated during DNA repair and recombination. Has endonuclease activity towards branched DNA substrates, introducing single-strand cuts in duplex DNA close to junctions with ss-DNA.</text>
</comment>
<comment type="subunit">
    <text evidence="1">Forms a heterodimer with SLX1.</text>
</comment>
<comment type="subcellular location">
    <subcellularLocation>
        <location evidence="1">Nucleus</location>
    </subcellularLocation>
</comment>
<comment type="PTM">
    <text evidence="1">Phosphorylated in response to DNA damage.</text>
</comment>
<comment type="similarity">
    <text evidence="1">Belongs to the SLX4 family.</text>
</comment>
<comment type="sequence caution" evidence="3">
    <conflict type="erroneous gene model prediction">
        <sequence resource="EMBL-CDS" id="EAQ93793"/>
    </conflict>
</comment>